<reference key="1">
    <citation type="submission" date="2007-11" db="EMBL/GenBank/DDBJ databases">
        <authorList>
            <consortium name="The Salmonella enterica serovar Paratyphi B Genome Sequencing Project"/>
            <person name="McClelland M."/>
            <person name="Sanderson E.K."/>
            <person name="Porwollik S."/>
            <person name="Spieth J."/>
            <person name="Clifton W.S."/>
            <person name="Fulton R."/>
            <person name="Cordes M."/>
            <person name="Wollam A."/>
            <person name="Shah N."/>
            <person name="Pepin K."/>
            <person name="Bhonagiri V."/>
            <person name="Nash W."/>
            <person name="Johnson M."/>
            <person name="Thiruvilangam P."/>
            <person name="Wilson R."/>
        </authorList>
    </citation>
    <scope>NUCLEOTIDE SEQUENCE [LARGE SCALE GENOMIC DNA]</scope>
    <source>
        <strain>ATCC BAA-1250 / SPB7</strain>
    </source>
</reference>
<sequence>MNSLFASTARGLEELLKTELEKLGAVGCQVVQGGVHFQGDTRLIYQSLMWSRLASRIILPMGECKVYSDLDLYLGVQAINWTEIFNPGATFAVHFSGLNDTIRNSQYGAMKVKDAIVDAFTRKNLPRPNVDRESPDLRINVWLNKETASIALDLSGDGLHLRGYRDRTGLAPIKETLAAAIVMRSGWQPGTPLLDPMCGSGTLLIEAAMWATDRAPGLHRGHWGFSGWAQHDETIWQEVKAEAQTRARKGLAEYSSHFYGSDSDARVIERARSNARRAGIGELITFEVKDVAQLSNPLPKGPYGTVISNPPYGERLDSEPALIALHSLLGRTMKNQFGGWNLSLFSASPDLLGSLQLRADKQFKAKNGPLDCVQKNYHIAETTADSKPATVAEDYANRLRKNLKKLEKWARQEGIECYRLYDADLPEYNVAVDRYGDRAVIQEYAPPKTVDAQKARQRLFDIIAATLSVLGIPPNKLVLKTRERQKGKNQYQKMSEKGEFLEVSEYNARLWVNLTDYLDTGLFLDHRIARRMLGEMSKGKDFLNLFSYTGSASVHAGLGGARSTTTVDMSRTYLEWAERNLRLNGLSGRAHRLIQADCLGWLREANEQFDLIFIDPPTFSNSKRMEESFDVQRDHVALMKDLKRLLRKGGTIMFSNNKRGFRMDLEGLAELGLTAQEITQKTLSPDFARNRQIHNCWLIRAA</sequence>
<accession>A9N6Y0</accession>
<keyword id="KW-0963">Cytoplasm</keyword>
<keyword id="KW-0489">Methyltransferase</keyword>
<keyword id="KW-0694">RNA-binding</keyword>
<keyword id="KW-0698">rRNA processing</keyword>
<keyword id="KW-0949">S-adenosyl-L-methionine</keyword>
<keyword id="KW-0808">Transferase</keyword>
<feature type="chain" id="PRO_0000366814" description="Ribosomal RNA large subunit methyltransferase K/L">
    <location>
        <begin position="1"/>
        <end position="702"/>
    </location>
</feature>
<feature type="domain" description="THUMP" evidence="1">
    <location>
        <begin position="43"/>
        <end position="154"/>
    </location>
</feature>
<gene>
    <name evidence="1" type="primary">rlmL</name>
    <name type="ordered locus">SPAB_02497</name>
</gene>
<comment type="function">
    <text evidence="1">Specifically methylates the guanine in position 2445 (m2G2445) and the guanine in position 2069 (m7G2069) of 23S rRNA.</text>
</comment>
<comment type="catalytic activity">
    <reaction evidence="1">
        <text>guanosine(2445) in 23S rRNA + S-adenosyl-L-methionine = N(2)-methylguanosine(2445) in 23S rRNA + S-adenosyl-L-homocysteine + H(+)</text>
        <dbReference type="Rhea" id="RHEA:42740"/>
        <dbReference type="Rhea" id="RHEA-COMP:10215"/>
        <dbReference type="Rhea" id="RHEA-COMP:10216"/>
        <dbReference type="ChEBI" id="CHEBI:15378"/>
        <dbReference type="ChEBI" id="CHEBI:57856"/>
        <dbReference type="ChEBI" id="CHEBI:59789"/>
        <dbReference type="ChEBI" id="CHEBI:74269"/>
        <dbReference type="ChEBI" id="CHEBI:74481"/>
        <dbReference type="EC" id="2.1.1.173"/>
    </reaction>
</comment>
<comment type="catalytic activity">
    <reaction evidence="1">
        <text>guanosine(2069) in 23S rRNA + S-adenosyl-L-methionine = N(2)-methylguanosine(2069) in 23S rRNA + S-adenosyl-L-homocysteine + H(+)</text>
        <dbReference type="Rhea" id="RHEA:43772"/>
        <dbReference type="Rhea" id="RHEA-COMP:10688"/>
        <dbReference type="Rhea" id="RHEA-COMP:10689"/>
        <dbReference type="ChEBI" id="CHEBI:15378"/>
        <dbReference type="ChEBI" id="CHEBI:57856"/>
        <dbReference type="ChEBI" id="CHEBI:59789"/>
        <dbReference type="ChEBI" id="CHEBI:74269"/>
        <dbReference type="ChEBI" id="CHEBI:74481"/>
        <dbReference type="EC" id="2.1.1.264"/>
    </reaction>
</comment>
<comment type="subcellular location">
    <subcellularLocation>
        <location evidence="1">Cytoplasm</location>
    </subcellularLocation>
</comment>
<comment type="similarity">
    <text evidence="1">Belongs to the methyltransferase superfamily. RlmKL family.</text>
</comment>
<dbReference type="EC" id="2.1.1.173" evidence="1"/>
<dbReference type="EC" id="2.1.1.264" evidence="1"/>
<dbReference type="EMBL" id="CP000886">
    <property type="protein sequence ID" value="ABX67877.1"/>
    <property type="molecule type" value="Genomic_DNA"/>
</dbReference>
<dbReference type="SMR" id="A9N6Y0"/>
<dbReference type="KEGG" id="spq:SPAB_02497"/>
<dbReference type="PATRIC" id="fig|1016998.12.peg.2365"/>
<dbReference type="HOGENOM" id="CLU_014042_2_0_6"/>
<dbReference type="BioCyc" id="SENT1016998:SPAB_RS10160-MONOMER"/>
<dbReference type="Proteomes" id="UP000008556">
    <property type="component" value="Chromosome"/>
</dbReference>
<dbReference type="GO" id="GO:0005737">
    <property type="term" value="C:cytoplasm"/>
    <property type="evidence" value="ECO:0007669"/>
    <property type="project" value="UniProtKB-SubCell"/>
</dbReference>
<dbReference type="GO" id="GO:0052915">
    <property type="term" value="F:23S rRNA (guanine(2445)-N(2))-methyltransferase activity"/>
    <property type="evidence" value="ECO:0007669"/>
    <property type="project" value="UniProtKB-UniRule"/>
</dbReference>
<dbReference type="GO" id="GO:0003723">
    <property type="term" value="F:RNA binding"/>
    <property type="evidence" value="ECO:0007669"/>
    <property type="project" value="UniProtKB-KW"/>
</dbReference>
<dbReference type="GO" id="GO:0070043">
    <property type="term" value="F:rRNA (guanine-N7-)-methyltransferase activity"/>
    <property type="evidence" value="ECO:0007669"/>
    <property type="project" value="UniProtKB-UniRule"/>
</dbReference>
<dbReference type="CDD" id="cd02440">
    <property type="entry name" value="AdoMet_MTases"/>
    <property type="match status" value="2"/>
</dbReference>
<dbReference type="CDD" id="cd11715">
    <property type="entry name" value="THUMP_AdoMetMT"/>
    <property type="match status" value="1"/>
</dbReference>
<dbReference type="FunFam" id="3.30.750.80:FF:000001">
    <property type="entry name" value="Ribosomal RNA large subunit methyltransferase K/L"/>
    <property type="match status" value="1"/>
</dbReference>
<dbReference type="FunFam" id="3.40.50.150:FF:000039">
    <property type="entry name" value="Ribosomal RNA large subunit methyltransferase K/L"/>
    <property type="match status" value="1"/>
</dbReference>
<dbReference type="Gene3D" id="3.30.2130.30">
    <property type="match status" value="1"/>
</dbReference>
<dbReference type="Gene3D" id="3.30.750.80">
    <property type="entry name" value="RNA methyltransferase domain (HRMD) like"/>
    <property type="match status" value="1"/>
</dbReference>
<dbReference type="Gene3D" id="3.40.50.150">
    <property type="entry name" value="Vaccinia Virus protein VP39"/>
    <property type="match status" value="2"/>
</dbReference>
<dbReference type="HAMAP" id="MF_01858">
    <property type="entry name" value="23SrRNA_methyltr_KL"/>
    <property type="match status" value="1"/>
</dbReference>
<dbReference type="InterPro" id="IPR017244">
    <property type="entry name" value="23SrRNA_methyltr_KL"/>
</dbReference>
<dbReference type="InterPro" id="IPR002052">
    <property type="entry name" value="DNA_methylase_N6_adenine_CS"/>
</dbReference>
<dbReference type="InterPro" id="IPR000241">
    <property type="entry name" value="RlmKL-like_Mtase"/>
</dbReference>
<dbReference type="InterPro" id="IPR053943">
    <property type="entry name" value="RlmKL-like_Mtase_CS"/>
</dbReference>
<dbReference type="InterPro" id="IPR054170">
    <property type="entry name" value="RlmL_1st"/>
</dbReference>
<dbReference type="InterPro" id="IPR019614">
    <property type="entry name" value="SAM-dep_methyl-trfase"/>
</dbReference>
<dbReference type="InterPro" id="IPR029063">
    <property type="entry name" value="SAM-dependent_MTases_sf"/>
</dbReference>
<dbReference type="InterPro" id="IPR004114">
    <property type="entry name" value="THUMP_dom"/>
</dbReference>
<dbReference type="NCBIfam" id="NF008748">
    <property type="entry name" value="PRK11783.1"/>
    <property type="match status" value="1"/>
</dbReference>
<dbReference type="PANTHER" id="PTHR47313">
    <property type="entry name" value="RIBOSOMAL RNA LARGE SUBUNIT METHYLTRANSFERASE K/L"/>
    <property type="match status" value="1"/>
</dbReference>
<dbReference type="PANTHER" id="PTHR47313:SF1">
    <property type="entry name" value="RIBOSOMAL RNA LARGE SUBUNIT METHYLTRANSFERASE K_L"/>
    <property type="match status" value="1"/>
</dbReference>
<dbReference type="Pfam" id="PF10672">
    <property type="entry name" value="Methyltrans_SAM"/>
    <property type="match status" value="1"/>
</dbReference>
<dbReference type="Pfam" id="PF22020">
    <property type="entry name" value="RlmL_1st"/>
    <property type="match status" value="1"/>
</dbReference>
<dbReference type="Pfam" id="PF02926">
    <property type="entry name" value="THUMP"/>
    <property type="match status" value="1"/>
</dbReference>
<dbReference type="Pfam" id="PF01170">
    <property type="entry name" value="UPF0020"/>
    <property type="match status" value="1"/>
</dbReference>
<dbReference type="PIRSF" id="PIRSF037618">
    <property type="entry name" value="RNA_Mtase_bacteria_prd"/>
    <property type="match status" value="1"/>
</dbReference>
<dbReference type="PRINTS" id="PR00507">
    <property type="entry name" value="N12N6MTFRASE"/>
</dbReference>
<dbReference type="SMART" id="SM00981">
    <property type="entry name" value="THUMP"/>
    <property type="match status" value="1"/>
</dbReference>
<dbReference type="SUPFAM" id="SSF53335">
    <property type="entry name" value="S-adenosyl-L-methionine-dependent methyltransferases"/>
    <property type="match status" value="2"/>
</dbReference>
<dbReference type="PROSITE" id="PS51165">
    <property type="entry name" value="THUMP"/>
    <property type="match status" value="1"/>
</dbReference>
<dbReference type="PROSITE" id="PS01261">
    <property type="entry name" value="UPF0020"/>
    <property type="match status" value="1"/>
</dbReference>
<evidence type="ECO:0000255" key="1">
    <source>
        <dbReference type="HAMAP-Rule" id="MF_01858"/>
    </source>
</evidence>
<proteinExistence type="inferred from homology"/>
<organism>
    <name type="scientific">Salmonella paratyphi B (strain ATCC BAA-1250 / SPB7)</name>
    <dbReference type="NCBI Taxonomy" id="1016998"/>
    <lineage>
        <taxon>Bacteria</taxon>
        <taxon>Pseudomonadati</taxon>
        <taxon>Pseudomonadota</taxon>
        <taxon>Gammaproteobacteria</taxon>
        <taxon>Enterobacterales</taxon>
        <taxon>Enterobacteriaceae</taxon>
        <taxon>Salmonella</taxon>
    </lineage>
</organism>
<protein>
    <recommendedName>
        <fullName evidence="1">Ribosomal RNA large subunit methyltransferase K/L</fullName>
    </recommendedName>
    <domain>
        <recommendedName>
            <fullName evidence="1">23S rRNA m2G2445 methyltransferase</fullName>
            <ecNumber evidence="1">2.1.1.173</ecNumber>
        </recommendedName>
        <alternativeName>
            <fullName evidence="1">rRNA (guanine-N(2)-)-methyltransferase RlmL</fullName>
        </alternativeName>
    </domain>
    <domain>
        <recommendedName>
            <fullName evidence="1">23S rRNA m7G2069 methyltransferase</fullName>
            <ecNumber evidence="1">2.1.1.264</ecNumber>
        </recommendedName>
        <alternativeName>
            <fullName evidence="1">rRNA (guanine-N(7)-)-methyltransferase RlmK</fullName>
        </alternativeName>
    </domain>
</protein>
<name>RLMKL_SALPB</name>